<dbReference type="EC" id="3.1.15.-" evidence="1"/>
<dbReference type="EMBL" id="CP000446">
    <property type="protein sequence ID" value="ABI37671.1"/>
    <property type="molecule type" value="Genomic_DNA"/>
</dbReference>
<dbReference type="RefSeq" id="WP_011621392.1">
    <property type="nucleotide sequence ID" value="NC_008321.1"/>
</dbReference>
<dbReference type="SMR" id="Q0HMP6"/>
<dbReference type="KEGG" id="she:Shewmr4_0591"/>
<dbReference type="HOGENOM" id="CLU_064761_2_0_6"/>
<dbReference type="GO" id="GO:0005737">
    <property type="term" value="C:cytoplasm"/>
    <property type="evidence" value="ECO:0007669"/>
    <property type="project" value="UniProtKB-SubCell"/>
</dbReference>
<dbReference type="GO" id="GO:0000175">
    <property type="term" value="F:3'-5'-RNA exonuclease activity"/>
    <property type="evidence" value="ECO:0007669"/>
    <property type="project" value="InterPro"/>
</dbReference>
<dbReference type="GO" id="GO:0003676">
    <property type="term" value="F:nucleic acid binding"/>
    <property type="evidence" value="ECO:0007669"/>
    <property type="project" value="InterPro"/>
</dbReference>
<dbReference type="GO" id="GO:0006259">
    <property type="term" value="P:DNA metabolic process"/>
    <property type="evidence" value="ECO:0007669"/>
    <property type="project" value="UniProtKB-ARBA"/>
</dbReference>
<dbReference type="CDD" id="cd06135">
    <property type="entry name" value="Orn"/>
    <property type="match status" value="1"/>
</dbReference>
<dbReference type="FunFam" id="3.30.420.10:FF:000003">
    <property type="entry name" value="Oligoribonuclease"/>
    <property type="match status" value="1"/>
</dbReference>
<dbReference type="Gene3D" id="3.30.420.10">
    <property type="entry name" value="Ribonuclease H-like superfamily/Ribonuclease H"/>
    <property type="match status" value="1"/>
</dbReference>
<dbReference type="HAMAP" id="MF_00045">
    <property type="entry name" value="Oligoribonuclease"/>
    <property type="match status" value="1"/>
</dbReference>
<dbReference type="InterPro" id="IPR013520">
    <property type="entry name" value="Exonuclease_RNaseT/DNA_pol3"/>
</dbReference>
<dbReference type="InterPro" id="IPR022894">
    <property type="entry name" value="Oligoribonuclease"/>
</dbReference>
<dbReference type="InterPro" id="IPR012337">
    <property type="entry name" value="RNaseH-like_sf"/>
</dbReference>
<dbReference type="InterPro" id="IPR036397">
    <property type="entry name" value="RNaseH_sf"/>
</dbReference>
<dbReference type="NCBIfam" id="NF003765">
    <property type="entry name" value="PRK05359.1"/>
    <property type="match status" value="1"/>
</dbReference>
<dbReference type="PANTHER" id="PTHR11046">
    <property type="entry name" value="OLIGORIBONUCLEASE, MITOCHONDRIAL"/>
    <property type="match status" value="1"/>
</dbReference>
<dbReference type="PANTHER" id="PTHR11046:SF0">
    <property type="entry name" value="OLIGORIBONUCLEASE, MITOCHONDRIAL"/>
    <property type="match status" value="1"/>
</dbReference>
<dbReference type="Pfam" id="PF00929">
    <property type="entry name" value="RNase_T"/>
    <property type="match status" value="1"/>
</dbReference>
<dbReference type="SMART" id="SM00479">
    <property type="entry name" value="EXOIII"/>
    <property type="match status" value="1"/>
</dbReference>
<dbReference type="SUPFAM" id="SSF53098">
    <property type="entry name" value="Ribonuclease H-like"/>
    <property type="match status" value="1"/>
</dbReference>
<feature type="chain" id="PRO_1000004290" description="Oligoribonuclease">
    <location>
        <begin position="1"/>
        <end position="181"/>
    </location>
</feature>
<feature type="domain" description="Exonuclease" evidence="1">
    <location>
        <begin position="8"/>
        <end position="171"/>
    </location>
</feature>
<feature type="active site" evidence="1">
    <location>
        <position position="129"/>
    </location>
</feature>
<keyword id="KW-0963">Cytoplasm</keyword>
<keyword id="KW-0269">Exonuclease</keyword>
<keyword id="KW-0378">Hydrolase</keyword>
<keyword id="KW-0540">Nuclease</keyword>
<gene>
    <name evidence="1" type="primary">orn</name>
    <name type="ordered locus">Shewmr4_0591</name>
</gene>
<protein>
    <recommendedName>
        <fullName evidence="1">Oligoribonuclease</fullName>
        <ecNumber evidence="1">3.1.15.-</ecNumber>
    </recommendedName>
</protein>
<accession>Q0HMP6</accession>
<proteinExistence type="inferred from homology"/>
<name>ORN_SHESM</name>
<organism>
    <name type="scientific">Shewanella sp. (strain MR-4)</name>
    <dbReference type="NCBI Taxonomy" id="60480"/>
    <lineage>
        <taxon>Bacteria</taxon>
        <taxon>Pseudomonadati</taxon>
        <taxon>Pseudomonadota</taxon>
        <taxon>Gammaproteobacteria</taxon>
        <taxon>Alteromonadales</taxon>
        <taxon>Shewanellaceae</taxon>
        <taxon>Shewanella</taxon>
    </lineage>
</organism>
<comment type="function">
    <text evidence="1">3'-to-5' exoribonuclease specific for small oligoribonucleotides.</text>
</comment>
<comment type="subcellular location">
    <subcellularLocation>
        <location evidence="1">Cytoplasm</location>
    </subcellularLocation>
</comment>
<comment type="similarity">
    <text evidence="1">Belongs to the oligoribonuclease family.</text>
</comment>
<sequence length="181" mass="20650">MAADANNLIWIDLEMTGLEPDVDRVIEIATLVTDQELNIIGQGPVIAIHQSDEVLAAMDDWNQKHHGESGLIDRVRASQVNEAQAVAQTIAFLEQYVPKGASPMCGNSVGQDRRFLNRYMRELEDYFHYRNLDVSTVKELVKRWSPETMAGFKKQNTHQALQDIQESIAELQYYRSKVFKI</sequence>
<evidence type="ECO:0000255" key="1">
    <source>
        <dbReference type="HAMAP-Rule" id="MF_00045"/>
    </source>
</evidence>
<reference key="1">
    <citation type="submission" date="2006-08" db="EMBL/GenBank/DDBJ databases">
        <title>Complete sequence of Shewanella sp. MR-4.</title>
        <authorList>
            <consortium name="US DOE Joint Genome Institute"/>
            <person name="Copeland A."/>
            <person name="Lucas S."/>
            <person name="Lapidus A."/>
            <person name="Barry K."/>
            <person name="Detter J.C."/>
            <person name="Glavina del Rio T."/>
            <person name="Hammon N."/>
            <person name="Israni S."/>
            <person name="Dalin E."/>
            <person name="Tice H."/>
            <person name="Pitluck S."/>
            <person name="Kiss H."/>
            <person name="Brettin T."/>
            <person name="Bruce D."/>
            <person name="Han C."/>
            <person name="Tapia R."/>
            <person name="Gilna P."/>
            <person name="Schmutz J."/>
            <person name="Larimer F."/>
            <person name="Land M."/>
            <person name="Hauser L."/>
            <person name="Kyrpides N."/>
            <person name="Mikhailova N."/>
            <person name="Nealson K."/>
            <person name="Konstantinidis K."/>
            <person name="Klappenbach J."/>
            <person name="Tiedje J."/>
            <person name="Richardson P."/>
        </authorList>
    </citation>
    <scope>NUCLEOTIDE SEQUENCE [LARGE SCALE GENOMIC DNA]</scope>
    <source>
        <strain>MR-4</strain>
    </source>
</reference>